<gene>
    <name evidence="1" type="primary">kdpC</name>
    <name type="ordered locus">PputW619_3484</name>
</gene>
<reference key="1">
    <citation type="submission" date="2008-02" db="EMBL/GenBank/DDBJ databases">
        <title>Complete sequence of Pseudomonas putida W619.</title>
        <authorList>
            <person name="Copeland A."/>
            <person name="Lucas S."/>
            <person name="Lapidus A."/>
            <person name="Barry K."/>
            <person name="Detter J.C."/>
            <person name="Glavina del Rio T."/>
            <person name="Dalin E."/>
            <person name="Tice H."/>
            <person name="Pitluck S."/>
            <person name="Chain P."/>
            <person name="Malfatti S."/>
            <person name="Shin M."/>
            <person name="Vergez L."/>
            <person name="Schmutz J."/>
            <person name="Larimer F."/>
            <person name="Land M."/>
            <person name="Hauser L."/>
            <person name="Kyrpides N."/>
            <person name="Kim E."/>
            <person name="Taghavi S."/>
            <person name="Vangronsveld D."/>
            <person name="van der Lelie D."/>
            <person name="Richardson P."/>
        </authorList>
    </citation>
    <scope>NUCLEOTIDE SEQUENCE [LARGE SCALE GENOMIC DNA]</scope>
    <source>
        <strain>W619</strain>
    </source>
</reference>
<sequence length="183" mass="18904">MNTYVRPALSLILLLAVVTGALYPLAVTGVAQVVFPEQANGSLVRDEQGQVRGSALIAQDFQGDGWFHSRPSAGAYATVASSASNLSPSNPALAERVAGDAAKLYQAGQGPVPQALLTTSGSGLDPHLPPQAVAYQIPRVAAARQIPVERLQALLEGATLHPLIGPPVVNVLALNQALSKFGL</sequence>
<accession>B1JAS8</accession>
<organism>
    <name type="scientific">Pseudomonas putida (strain W619)</name>
    <dbReference type="NCBI Taxonomy" id="390235"/>
    <lineage>
        <taxon>Bacteria</taxon>
        <taxon>Pseudomonadati</taxon>
        <taxon>Pseudomonadota</taxon>
        <taxon>Gammaproteobacteria</taxon>
        <taxon>Pseudomonadales</taxon>
        <taxon>Pseudomonadaceae</taxon>
        <taxon>Pseudomonas</taxon>
    </lineage>
</organism>
<dbReference type="EMBL" id="CP000949">
    <property type="protein sequence ID" value="ACA73967.1"/>
    <property type="molecule type" value="Genomic_DNA"/>
</dbReference>
<dbReference type="SMR" id="B1JAS8"/>
<dbReference type="STRING" id="390235.PputW619_3484"/>
<dbReference type="KEGG" id="ppw:PputW619_3484"/>
<dbReference type="eggNOG" id="COG2156">
    <property type="taxonomic scope" value="Bacteria"/>
</dbReference>
<dbReference type="HOGENOM" id="CLU_077094_2_0_6"/>
<dbReference type="OrthoDB" id="9788285at2"/>
<dbReference type="GO" id="GO:0005886">
    <property type="term" value="C:plasma membrane"/>
    <property type="evidence" value="ECO:0007669"/>
    <property type="project" value="UniProtKB-SubCell"/>
</dbReference>
<dbReference type="GO" id="GO:0005524">
    <property type="term" value="F:ATP binding"/>
    <property type="evidence" value="ECO:0007669"/>
    <property type="project" value="UniProtKB-UniRule"/>
</dbReference>
<dbReference type="GO" id="GO:0008556">
    <property type="term" value="F:P-type potassium transmembrane transporter activity"/>
    <property type="evidence" value="ECO:0007669"/>
    <property type="project" value="InterPro"/>
</dbReference>
<dbReference type="HAMAP" id="MF_00276">
    <property type="entry name" value="KdpC"/>
    <property type="match status" value="1"/>
</dbReference>
<dbReference type="InterPro" id="IPR003820">
    <property type="entry name" value="KdpC"/>
</dbReference>
<dbReference type="NCBIfam" id="TIGR00681">
    <property type="entry name" value="kdpC"/>
    <property type="match status" value="1"/>
</dbReference>
<dbReference type="NCBIfam" id="NF001454">
    <property type="entry name" value="PRK00315.1"/>
    <property type="match status" value="1"/>
</dbReference>
<dbReference type="PANTHER" id="PTHR30042">
    <property type="entry name" value="POTASSIUM-TRANSPORTING ATPASE C CHAIN"/>
    <property type="match status" value="1"/>
</dbReference>
<dbReference type="PANTHER" id="PTHR30042:SF2">
    <property type="entry name" value="POTASSIUM-TRANSPORTING ATPASE KDPC SUBUNIT"/>
    <property type="match status" value="1"/>
</dbReference>
<dbReference type="Pfam" id="PF02669">
    <property type="entry name" value="KdpC"/>
    <property type="match status" value="1"/>
</dbReference>
<dbReference type="PIRSF" id="PIRSF001296">
    <property type="entry name" value="K_ATPase_KdpC"/>
    <property type="match status" value="1"/>
</dbReference>
<protein>
    <recommendedName>
        <fullName evidence="1">Potassium-transporting ATPase KdpC subunit</fullName>
    </recommendedName>
    <alternativeName>
        <fullName evidence="1">ATP phosphohydrolase [potassium-transporting] C chain</fullName>
    </alternativeName>
    <alternativeName>
        <fullName evidence="1">Potassium-binding and translocating subunit C</fullName>
    </alternativeName>
    <alternativeName>
        <fullName evidence="1">Potassium-translocating ATPase C chain</fullName>
    </alternativeName>
</protein>
<comment type="function">
    <text evidence="1">Part of the high-affinity ATP-driven potassium transport (or Kdp) system, which catalyzes the hydrolysis of ATP coupled with the electrogenic transport of potassium into the cytoplasm. This subunit acts as a catalytic chaperone that increases the ATP-binding affinity of the ATP-hydrolyzing subunit KdpB by the formation of a transient KdpB/KdpC/ATP ternary complex.</text>
</comment>
<comment type="subunit">
    <text evidence="1">The system is composed of three essential subunits: KdpA, KdpB and KdpC.</text>
</comment>
<comment type="subcellular location">
    <subcellularLocation>
        <location evidence="1">Cell inner membrane</location>
        <topology evidence="1">Single-pass membrane protein</topology>
    </subcellularLocation>
</comment>
<comment type="similarity">
    <text evidence="1">Belongs to the KdpC family.</text>
</comment>
<evidence type="ECO:0000255" key="1">
    <source>
        <dbReference type="HAMAP-Rule" id="MF_00276"/>
    </source>
</evidence>
<name>KDPC_PSEPW</name>
<feature type="chain" id="PRO_1000114734" description="Potassium-transporting ATPase KdpC subunit">
    <location>
        <begin position="1"/>
        <end position="183"/>
    </location>
</feature>
<feature type="transmembrane region" description="Helical" evidence="1">
    <location>
        <begin position="11"/>
        <end position="31"/>
    </location>
</feature>
<keyword id="KW-0067">ATP-binding</keyword>
<keyword id="KW-0997">Cell inner membrane</keyword>
<keyword id="KW-1003">Cell membrane</keyword>
<keyword id="KW-0406">Ion transport</keyword>
<keyword id="KW-0472">Membrane</keyword>
<keyword id="KW-0547">Nucleotide-binding</keyword>
<keyword id="KW-0630">Potassium</keyword>
<keyword id="KW-0633">Potassium transport</keyword>
<keyword id="KW-0812">Transmembrane</keyword>
<keyword id="KW-1133">Transmembrane helix</keyword>
<keyword id="KW-0813">Transport</keyword>
<proteinExistence type="inferred from homology"/>